<feature type="signal peptide" evidence="1">
    <location>
        <begin position="1"/>
        <end position="40"/>
    </location>
</feature>
<feature type="chain" id="PRO_0000271380" description="Fibronectin type III domain-containing protein 4">
    <location>
        <begin position="41"/>
        <end position="231"/>
    </location>
</feature>
<feature type="chain" id="PRO_0000461430" description="Soluble FNDC4" evidence="12 13">
    <location>
        <begin position="41"/>
        <end status="unknown"/>
    </location>
</feature>
<feature type="topological domain" description="Extracellular" evidence="1">
    <location>
        <begin position="41"/>
        <end position="163"/>
    </location>
</feature>
<feature type="transmembrane region" description="Helical" evidence="1">
    <location>
        <begin position="164"/>
        <end position="184"/>
    </location>
</feature>
<feature type="topological domain" description="Cytoplasmic" evidence="1">
    <location>
        <begin position="185"/>
        <end position="231"/>
    </location>
</feature>
<feature type="domain" description="Fibronectin type-III" evidence="2">
    <location>
        <begin position="43"/>
        <end position="136"/>
    </location>
</feature>
<feature type="region of interest" description="Disordered" evidence="3">
    <location>
        <begin position="118"/>
        <end position="156"/>
    </location>
</feature>
<feature type="region of interest" description="Disordered" evidence="3">
    <location>
        <begin position="193"/>
        <end position="231"/>
    </location>
</feature>
<feature type="compositionally biased region" description="Basic and acidic residues" evidence="3">
    <location>
        <begin position="193"/>
        <end position="205"/>
    </location>
</feature>
<feature type="glycosylation site" description="N-linked (GlcNAc...) asparagine" evidence="1">
    <location>
        <position position="48"/>
    </location>
</feature>
<feature type="glycosylation site" description="N-linked (GlcNAc...) asparagine" evidence="1">
    <location>
        <position position="143"/>
    </location>
</feature>
<feature type="sequence conflict" description="In Ref. 1; BAB28710." evidence="11" ref="1">
    <original>G</original>
    <variation>A</variation>
    <location>
        <position position="126"/>
    </location>
</feature>
<reference key="1">
    <citation type="journal article" date="2002" name="Gene">
        <title>Frcp1 and Frcp2, two novel fibronectin type III repeat containing genes.</title>
        <authorList>
            <person name="Teufel A."/>
            <person name="Malik N."/>
            <person name="Mukhopadhyay M."/>
            <person name="Westphal H."/>
        </authorList>
    </citation>
    <scope>NUCLEOTIDE SEQUENCE [GENOMIC DNA]</scope>
    <scope>TISSUE SPECIFICITY</scope>
    <scope>DEVELOPMENTAL STAGE</scope>
    <source>
        <strain>129</strain>
    </source>
</reference>
<reference key="2">
    <citation type="journal article" date="2005" name="Science">
        <title>The transcriptional landscape of the mammalian genome.</title>
        <authorList>
            <person name="Carninci P."/>
            <person name="Kasukawa T."/>
            <person name="Katayama S."/>
            <person name="Gough J."/>
            <person name="Frith M.C."/>
            <person name="Maeda N."/>
            <person name="Oyama R."/>
            <person name="Ravasi T."/>
            <person name="Lenhard B."/>
            <person name="Wells C."/>
            <person name="Kodzius R."/>
            <person name="Shimokawa K."/>
            <person name="Bajic V.B."/>
            <person name="Brenner S.E."/>
            <person name="Batalov S."/>
            <person name="Forrest A.R."/>
            <person name="Zavolan M."/>
            <person name="Davis M.J."/>
            <person name="Wilming L.G."/>
            <person name="Aidinis V."/>
            <person name="Allen J.E."/>
            <person name="Ambesi-Impiombato A."/>
            <person name="Apweiler R."/>
            <person name="Aturaliya R.N."/>
            <person name="Bailey T.L."/>
            <person name="Bansal M."/>
            <person name="Baxter L."/>
            <person name="Beisel K.W."/>
            <person name="Bersano T."/>
            <person name="Bono H."/>
            <person name="Chalk A.M."/>
            <person name="Chiu K.P."/>
            <person name="Choudhary V."/>
            <person name="Christoffels A."/>
            <person name="Clutterbuck D.R."/>
            <person name="Crowe M.L."/>
            <person name="Dalla E."/>
            <person name="Dalrymple B.P."/>
            <person name="de Bono B."/>
            <person name="Della Gatta G."/>
            <person name="di Bernardo D."/>
            <person name="Down T."/>
            <person name="Engstrom P."/>
            <person name="Fagiolini M."/>
            <person name="Faulkner G."/>
            <person name="Fletcher C.F."/>
            <person name="Fukushima T."/>
            <person name="Furuno M."/>
            <person name="Futaki S."/>
            <person name="Gariboldi M."/>
            <person name="Georgii-Hemming P."/>
            <person name="Gingeras T.R."/>
            <person name="Gojobori T."/>
            <person name="Green R.E."/>
            <person name="Gustincich S."/>
            <person name="Harbers M."/>
            <person name="Hayashi Y."/>
            <person name="Hensch T.K."/>
            <person name="Hirokawa N."/>
            <person name="Hill D."/>
            <person name="Huminiecki L."/>
            <person name="Iacono M."/>
            <person name="Ikeo K."/>
            <person name="Iwama A."/>
            <person name="Ishikawa T."/>
            <person name="Jakt M."/>
            <person name="Kanapin A."/>
            <person name="Katoh M."/>
            <person name="Kawasawa Y."/>
            <person name="Kelso J."/>
            <person name="Kitamura H."/>
            <person name="Kitano H."/>
            <person name="Kollias G."/>
            <person name="Krishnan S.P."/>
            <person name="Kruger A."/>
            <person name="Kummerfeld S.K."/>
            <person name="Kurochkin I.V."/>
            <person name="Lareau L.F."/>
            <person name="Lazarevic D."/>
            <person name="Lipovich L."/>
            <person name="Liu J."/>
            <person name="Liuni S."/>
            <person name="McWilliam S."/>
            <person name="Madan Babu M."/>
            <person name="Madera M."/>
            <person name="Marchionni L."/>
            <person name="Matsuda H."/>
            <person name="Matsuzawa S."/>
            <person name="Miki H."/>
            <person name="Mignone F."/>
            <person name="Miyake S."/>
            <person name="Morris K."/>
            <person name="Mottagui-Tabar S."/>
            <person name="Mulder N."/>
            <person name="Nakano N."/>
            <person name="Nakauchi H."/>
            <person name="Ng P."/>
            <person name="Nilsson R."/>
            <person name="Nishiguchi S."/>
            <person name="Nishikawa S."/>
            <person name="Nori F."/>
            <person name="Ohara O."/>
            <person name="Okazaki Y."/>
            <person name="Orlando V."/>
            <person name="Pang K.C."/>
            <person name="Pavan W.J."/>
            <person name="Pavesi G."/>
            <person name="Pesole G."/>
            <person name="Petrovsky N."/>
            <person name="Piazza S."/>
            <person name="Reed J."/>
            <person name="Reid J.F."/>
            <person name="Ring B.Z."/>
            <person name="Ringwald M."/>
            <person name="Rost B."/>
            <person name="Ruan Y."/>
            <person name="Salzberg S.L."/>
            <person name="Sandelin A."/>
            <person name="Schneider C."/>
            <person name="Schoenbach C."/>
            <person name="Sekiguchi K."/>
            <person name="Semple C.A."/>
            <person name="Seno S."/>
            <person name="Sessa L."/>
            <person name="Sheng Y."/>
            <person name="Shibata Y."/>
            <person name="Shimada H."/>
            <person name="Shimada K."/>
            <person name="Silva D."/>
            <person name="Sinclair B."/>
            <person name="Sperling S."/>
            <person name="Stupka E."/>
            <person name="Sugiura K."/>
            <person name="Sultana R."/>
            <person name="Takenaka Y."/>
            <person name="Taki K."/>
            <person name="Tammoja K."/>
            <person name="Tan S.L."/>
            <person name="Tang S."/>
            <person name="Taylor M.S."/>
            <person name="Tegner J."/>
            <person name="Teichmann S.A."/>
            <person name="Ueda H.R."/>
            <person name="van Nimwegen E."/>
            <person name="Verardo R."/>
            <person name="Wei C.L."/>
            <person name="Yagi K."/>
            <person name="Yamanishi H."/>
            <person name="Zabarovsky E."/>
            <person name="Zhu S."/>
            <person name="Zimmer A."/>
            <person name="Hide W."/>
            <person name="Bult C."/>
            <person name="Grimmond S.M."/>
            <person name="Teasdale R.D."/>
            <person name="Liu E.T."/>
            <person name="Brusic V."/>
            <person name="Quackenbush J."/>
            <person name="Wahlestedt C."/>
            <person name="Mattick J.S."/>
            <person name="Hume D.A."/>
            <person name="Kai C."/>
            <person name="Sasaki D."/>
            <person name="Tomaru Y."/>
            <person name="Fukuda S."/>
            <person name="Kanamori-Katayama M."/>
            <person name="Suzuki M."/>
            <person name="Aoki J."/>
            <person name="Arakawa T."/>
            <person name="Iida J."/>
            <person name="Imamura K."/>
            <person name="Itoh M."/>
            <person name="Kato T."/>
            <person name="Kawaji H."/>
            <person name="Kawagashira N."/>
            <person name="Kawashima T."/>
            <person name="Kojima M."/>
            <person name="Kondo S."/>
            <person name="Konno H."/>
            <person name="Nakano K."/>
            <person name="Ninomiya N."/>
            <person name="Nishio T."/>
            <person name="Okada M."/>
            <person name="Plessy C."/>
            <person name="Shibata K."/>
            <person name="Shiraki T."/>
            <person name="Suzuki S."/>
            <person name="Tagami M."/>
            <person name="Waki K."/>
            <person name="Watahiki A."/>
            <person name="Okamura-Oho Y."/>
            <person name="Suzuki H."/>
            <person name="Kawai J."/>
            <person name="Hayashizaki Y."/>
        </authorList>
    </citation>
    <scope>NUCLEOTIDE SEQUENCE [LARGE SCALE MRNA]</scope>
    <source>
        <strain>C57BL/6J</strain>
        <tissue>Cerebellum</tissue>
    </source>
</reference>
<reference key="3">
    <citation type="journal article" date="2016" name="Nat. Commun.">
        <title>FNDC4 acts as an anti-inflammatory factor on macrophages and improves colitis in mice.</title>
        <authorList>
            <person name="Bosma M."/>
            <person name="Gerling M."/>
            <person name="Pasto J."/>
            <person name="Georgiadi A."/>
            <person name="Graham E."/>
            <person name="Shilkova O."/>
            <person name="Iwata Y."/>
            <person name="Almer S."/>
            <person name="Soederman J."/>
            <person name="Toftgaard R."/>
            <person name="Wermeling F."/>
            <person name="Bostroem E.A."/>
            <person name="Bostroem P.A."/>
        </authorList>
    </citation>
    <scope>FUNCTION (SOLUBLE FNDC4)</scope>
    <scope>SUBCELLULAR LOCATION (SOLUBLE FNDC4)</scope>
    <scope>INDUCTION BY INFLAMMATION</scope>
    <scope>TISSUE SPECIFICITY</scope>
    <scope>DISRUPTION PHENOTYPE</scope>
</reference>
<reference key="4">
    <citation type="journal article" date="2018" name="Biomed. Res. Int.">
        <title>FNDC4 Inhibits RANKL-Induced Osteoclast Formation by Suppressing NF-kappaB Activation and CXCL10 Expression.</title>
        <authorList>
            <person name="Lv Z.T."/>
            <person name="Liang S."/>
            <person name="Chen K."/>
            <person name="Zhang J.M."/>
            <person name="Cheng P."/>
            <person name="Guo J.C."/>
            <person name="Yang Q."/>
            <person name="Zhou C.H."/>
            <person name="Liao H."/>
            <person name="Chen A.M."/>
        </authorList>
    </citation>
    <scope>FUNCTION (SOLUBLE FNDC4)</scope>
</reference>
<reference key="5">
    <citation type="journal article" date="2018" name="Biochem. Biophys. Res. Commun.">
        <title>Fibronectin Type III Domain Containing 4 attenuates hyperlipidemia-induced insulin resistance via suppression of inflammation and ER stress through HO-1 expression in adipocytes.</title>
        <authorList>
            <person name="Lee W."/>
            <person name="Yun S."/>
            <person name="Choi G.H."/>
            <person name="Jung T.W."/>
        </authorList>
    </citation>
    <scope>FUNCTION (SOLUBLE FNDC4)</scope>
</reference>
<reference key="6">
    <citation type="journal article" date="2021" name="Nat. Commun.">
        <title>Orphan GPR116 mediates the insulin sensitizing effects of the hepatokine FNDC4 in adipose tissue.</title>
        <authorList>
            <person name="Georgiadi A."/>
            <person name="Lopez-Salazar V."/>
            <person name="Merahbi R.E."/>
            <person name="Karikari R.A."/>
            <person name="Ma X."/>
            <person name="Mourao A."/>
            <person name="Klepac K."/>
            <person name="Buehler L."/>
            <person name="Alfaro A.J."/>
            <person name="Kaczmarek I."/>
            <person name="Linford A."/>
            <person name="Bosma M."/>
            <person name="Shilkova O."/>
            <person name="Ritvos O."/>
            <person name="Nakamura N."/>
            <person name="Hirose S."/>
            <person name="Lassi M."/>
            <person name="Teperino R."/>
            <person name="Machado J."/>
            <person name="Scheideler M."/>
            <person name="Dietrich A."/>
            <person name="Geerlof A."/>
            <person name="Feuchtinger A."/>
            <person name="Blutke A."/>
            <person name="Fischer K."/>
            <person name="Mueller T.D."/>
            <person name="Kessler K."/>
            <person name="Schoeneberg T."/>
            <person name="Thor D."/>
            <person name="Hornemann S."/>
            <person name="Kruse M."/>
            <person name="Nawroth P."/>
            <person name="Pivovarova-Ramich O."/>
            <person name="Pfeiffer A.F.H."/>
            <person name="Sattler M."/>
            <person name="Blueher M."/>
            <person name="Herzig S."/>
        </authorList>
    </citation>
    <scope>FUNCTION (SOLUBLE FNDC4)</scope>
    <scope>TISSUE SPECIFICITY</scope>
    <scope>INDUCTION BY HIGH-FAT DIET</scope>
    <scope>SUBCELLULAR LOCATION</scope>
</reference>
<sequence length="231" mass="24933">MPLAPPANSVETMASLMPLSPYLSPTVLLLVSCDLGFVRADRPPSPVNVTVTHLRANSATVSWDVPEGNIVIGYSISQQRQNGPGQRVIREVNTTTRACALWGLAEDSDYTVQVRSIGLRGESPPGPRVHFRTLKGSDRLPSNSSSPGDITVEGLDGERPLQTGEVVIIVVVLLMWAAVIGLFCRQYDIIKDNDSNNNPKEKGKGPEQSPQGRPVGTTRQKKSPSINTIDV</sequence>
<gene>
    <name type="primary">Fndc4</name>
    <name type="synonym">Fnmp1</name>
    <name evidence="9" type="synonym">Frcp1</name>
</gene>
<dbReference type="EMBL" id="AF466728">
    <property type="protein sequence ID" value="AAO85424.1"/>
    <property type="status" value="ALT_INIT"/>
    <property type="molecule type" value="Genomic_DNA"/>
</dbReference>
<dbReference type="EMBL" id="AK013203">
    <property type="protein sequence ID" value="BAB28710.2"/>
    <property type="molecule type" value="mRNA"/>
</dbReference>
<dbReference type="EMBL" id="AK163183">
    <property type="protein sequence ID" value="BAE37223.1"/>
    <property type="molecule type" value="mRNA"/>
</dbReference>
<dbReference type="CCDS" id="CCDS19181.1"/>
<dbReference type="RefSeq" id="NP_001343875.1">
    <property type="nucleotide sequence ID" value="NM_001356946.2"/>
</dbReference>
<dbReference type="RefSeq" id="NP_071869.2">
    <property type="nucleotide sequence ID" value="NM_022424.7"/>
</dbReference>
<dbReference type="RefSeq" id="XP_006504107.1">
    <property type="nucleotide sequence ID" value="XM_006504044.2"/>
</dbReference>
<dbReference type="SMR" id="Q3TR08"/>
<dbReference type="FunCoup" id="Q3TR08">
    <property type="interactions" value="268"/>
</dbReference>
<dbReference type="STRING" id="10090.ENSMUSP00000127404"/>
<dbReference type="GlyCosmos" id="Q3TR08">
    <property type="glycosylation" value="2 sites, No reported glycans"/>
</dbReference>
<dbReference type="GlyGen" id="Q3TR08">
    <property type="glycosylation" value="2 sites, 1 N-linked glycan (1 site)"/>
</dbReference>
<dbReference type="iPTMnet" id="Q3TR08"/>
<dbReference type="PhosphoSitePlus" id="Q3TR08"/>
<dbReference type="PaxDb" id="10090-ENSMUSP00000127404"/>
<dbReference type="ProteomicsDB" id="267607"/>
<dbReference type="Antibodypedia" id="28574">
    <property type="antibodies" value="285 antibodies from 22 providers"/>
</dbReference>
<dbReference type="DNASU" id="64339"/>
<dbReference type="Ensembl" id="ENSMUST00000041266.11">
    <property type="protein sequence ID" value="ENSMUSP00000047185.8"/>
    <property type="gene ID" value="ENSMUSG00000038552.15"/>
</dbReference>
<dbReference type="Ensembl" id="ENSMUST00000172435.8">
    <property type="protein sequence ID" value="ENSMUSP00000127404.2"/>
    <property type="gene ID" value="ENSMUSG00000038552.15"/>
</dbReference>
<dbReference type="GeneID" id="64339"/>
<dbReference type="KEGG" id="mmu:64339"/>
<dbReference type="UCSC" id="uc008wyd.1">
    <property type="organism name" value="mouse"/>
</dbReference>
<dbReference type="AGR" id="MGI:1917195"/>
<dbReference type="CTD" id="64838"/>
<dbReference type="MGI" id="MGI:1917195">
    <property type="gene designation" value="Fndc4"/>
</dbReference>
<dbReference type="VEuPathDB" id="HostDB:ENSMUSG00000038552"/>
<dbReference type="eggNOG" id="ENOG502QQ99">
    <property type="taxonomic scope" value="Eukaryota"/>
</dbReference>
<dbReference type="GeneTree" id="ENSGT00390000004923"/>
<dbReference type="HOGENOM" id="CLU_089166_0_0_1"/>
<dbReference type="InParanoid" id="Q3TR08"/>
<dbReference type="OMA" id="PMGARQK"/>
<dbReference type="OrthoDB" id="5843172at2759"/>
<dbReference type="PhylomeDB" id="Q3TR08"/>
<dbReference type="TreeFam" id="TF325415"/>
<dbReference type="BioGRID-ORCS" id="64339">
    <property type="hits" value="3 hits in 76 CRISPR screens"/>
</dbReference>
<dbReference type="ChiTaRS" id="Fndc4">
    <property type="organism name" value="mouse"/>
</dbReference>
<dbReference type="PRO" id="PR:Q3TR08"/>
<dbReference type="Proteomes" id="UP000000589">
    <property type="component" value="Chromosome 5"/>
</dbReference>
<dbReference type="RNAct" id="Q3TR08">
    <property type="molecule type" value="protein"/>
</dbReference>
<dbReference type="Bgee" id="ENSMUSG00000038552">
    <property type="expression patterns" value="Expressed in motor neuron and 201 other cell types or tissues"/>
</dbReference>
<dbReference type="ExpressionAtlas" id="Q3TR08">
    <property type="expression patterns" value="baseline and differential"/>
</dbReference>
<dbReference type="GO" id="GO:0005783">
    <property type="term" value="C:endoplasmic reticulum"/>
    <property type="evidence" value="ECO:0000314"/>
    <property type="project" value="UniProtKB"/>
</dbReference>
<dbReference type="GO" id="GO:0005615">
    <property type="term" value="C:extracellular space"/>
    <property type="evidence" value="ECO:0000314"/>
    <property type="project" value="UniProtKB"/>
</dbReference>
<dbReference type="GO" id="GO:0005886">
    <property type="term" value="C:plasma membrane"/>
    <property type="evidence" value="ECO:0000314"/>
    <property type="project" value="UniProtKB"/>
</dbReference>
<dbReference type="GO" id="GO:0050728">
    <property type="term" value="P:negative regulation of inflammatory response"/>
    <property type="evidence" value="ECO:0000314"/>
    <property type="project" value="UniProtKB"/>
</dbReference>
<dbReference type="GO" id="GO:0071559">
    <property type="term" value="P:response to transforming growth factor beta"/>
    <property type="evidence" value="ECO:0007669"/>
    <property type="project" value="Ensembl"/>
</dbReference>
<dbReference type="CDD" id="cd00063">
    <property type="entry name" value="FN3"/>
    <property type="match status" value="1"/>
</dbReference>
<dbReference type="FunFam" id="2.60.40.10:FF:000117">
    <property type="entry name" value="Fibronectin type III domain containing 5"/>
    <property type="match status" value="1"/>
</dbReference>
<dbReference type="Gene3D" id="2.60.40.10">
    <property type="entry name" value="Immunoglobulins"/>
    <property type="match status" value="1"/>
</dbReference>
<dbReference type="InterPro" id="IPR003961">
    <property type="entry name" value="FN3_dom"/>
</dbReference>
<dbReference type="InterPro" id="IPR036116">
    <property type="entry name" value="FN3_sf"/>
</dbReference>
<dbReference type="InterPro" id="IPR052120">
    <property type="entry name" value="FNDC_type_III_4/5"/>
</dbReference>
<dbReference type="InterPro" id="IPR013783">
    <property type="entry name" value="Ig-like_fold"/>
</dbReference>
<dbReference type="PANTHER" id="PTHR14470">
    <property type="entry name" value="FIBRONECTIN TYPE III DOMAIN-CONTAINING PROTEIN"/>
    <property type="match status" value="1"/>
</dbReference>
<dbReference type="PANTHER" id="PTHR14470:SF2">
    <property type="entry name" value="FIBRONECTIN TYPE III DOMAIN-CONTAINING PROTEIN 4"/>
    <property type="match status" value="1"/>
</dbReference>
<dbReference type="Pfam" id="PF00041">
    <property type="entry name" value="fn3"/>
    <property type="match status" value="1"/>
</dbReference>
<dbReference type="SMART" id="SM00060">
    <property type="entry name" value="FN3"/>
    <property type="match status" value="1"/>
</dbReference>
<dbReference type="SUPFAM" id="SSF49265">
    <property type="entry name" value="Fibronectin type III"/>
    <property type="match status" value="1"/>
</dbReference>
<dbReference type="PROSITE" id="PS50853">
    <property type="entry name" value="FN3"/>
    <property type="match status" value="1"/>
</dbReference>
<comment type="function">
    <molecule>Soluble FNDC4</molecule>
    <text evidence="5 6 7 8">Has anti-inflammatory properties. In the colon, acts on macrophages to down-regulate inflammation (PubMed:27066907). May suppress osteoclastogenesis and mature osteoclast resorptive function (PubMed:29977911). In white adipose tissue, decreases local inflammation, via interaction with GPR116 (PubMed:29787756, PubMed:34016966). Also required for proper systemic glucose tolerance, specifically sensitizing white adipocytes to insulin and promoting glucose uptake (PubMed:29787756, PubMed:34016966). The insulin sensitizing function in adipose tissue is mediated by interaction with ADGRF5/GPR116 and activation of cAMP signaling (PubMed:34016966).</text>
</comment>
<comment type="subcellular location">
    <molecule>Fibronectin type III domain-containing protein 4</molecule>
    <subcellularLocation>
        <location evidence="11">Membrane</location>
        <topology evidence="11">Single-pass type I membrane protein</topology>
    </subcellularLocation>
</comment>
<comment type="subcellular location">
    <molecule>Soluble FNDC4</molecule>
    <subcellularLocation>
        <location evidence="5 8">Secreted</location>
    </subcellularLocation>
</comment>
<comment type="tissue specificity">
    <text evidence="4 5 8">Predominantly expressed in the liver and in the brain, including in the cortex, hypothalamus and hippocampus (PubMed:12384288, PubMed:34016966). Also expressed in heart, lung, kidney and testis (PubMed:12384288). In the colon, expressed in the epithelium and in a subset of immune cells in lymphoid aggregates (PubMed:27066907).</text>
</comment>
<comment type="developmental stage">
    <text evidence="4">Strongly expressed in the head at 9.5 dpc. At 10.5 dpc, expressed in the fore- and midbrain. At 11.5 dpc, the expression extends to the hindbrain region.</text>
</comment>
<comment type="induction">
    <molecule>Fibronectin type III domain-containing protein 4</molecule>
    <text evidence="5 8">Up-regulated by inflammation in the colon and kidney (PubMed:27066907). Not regulated, at least at the transcript level, by exercise in the liver, nor in muscle (PubMed:27066907). Down-regulated by high-fat diet feeding in the liver at the transcript level (PubMed:34016966).</text>
</comment>
<comment type="induction">
    <molecule>Soluble FNDC4</molecule>
    <text evidence="8">May be subjected to circadian rhythm. Present in the circulation throughout the day, but tends to peak several hours before the mice enter the feeding/dark phase (PubMed:34016966). Down-regulated by high-fat diet feeding in the blood stream (PubMed:34016966).</text>
</comment>
<comment type="disruption phenotype">
    <text evidence="5">Knockout animals show no overt phenotype.</text>
</comment>
<comment type="sequence caution" evidence="11">
    <conflict type="erroneous initiation">
        <sequence resource="EMBL-CDS" id="AAO85424"/>
    </conflict>
    <text>Truncated N-terminus.</text>
</comment>
<evidence type="ECO:0000255" key="1"/>
<evidence type="ECO:0000255" key="2">
    <source>
        <dbReference type="PROSITE-ProRule" id="PRU00316"/>
    </source>
</evidence>
<evidence type="ECO:0000256" key="3">
    <source>
        <dbReference type="SAM" id="MobiDB-lite"/>
    </source>
</evidence>
<evidence type="ECO:0000269" key="4">
    <source>
    </source>
</evidence>
<evidence type="ECO:0000269" key="5">
    <source>
    </source>
</evidence>
<evidence type="ECO:0000269" key="6">
    <source>
    </source>
</evidence>
<evidence type="ECO:0000269" key="7">
    <source>
    </source>
</evidence>
<evidence type="ECO:0000269" key="8">
    <source>
    </source>
</evidence>
<evidence type="ECO:0000303" key="9">
    <source>
    </source>
</evidence>
<evidence type="ECO:0000303" key="10">
    <source>
    </source>
</evidence>
<evidence type="ECO:0000305" key="11"/>
<evidence type="ECO:0000305" key="12">
    <source>
    </source>
</evidence>
<evidence type="ECO:0000305" key="13">
    <source>
    </source>
</evidence>
<accession>Q3TR08</accession>
<accession>Q810E5</accession>
<accession>Q9CYY4</accession>
<organism>
    <name type="scientific">Mus musculus</name>
    <name type="common">Mouse</name>
    <dbReference type="NCBI Taxonomy" id="10090"/>
    <lineage>
        <taxon>Eukaryota</taxon>
        <taxon>Metazoa</taxon>
        <taxon>Chordata</taxon>
        <taxon>Craniata</taxon>
        <taxon>Vertebrata</taxon>
        <taxon>Euteleostomi</taxon>
        <taxon>Mammalia</taxon>
        <taxon>Eutheria</taxon>
        <taxon>Euarchontoglires</taxon>
        <taxon>Glires</taxon>
        <taxon>Rodentia</taxon>
        <taxon>Myomorpha</taxon>
        <taxon>Muroidea</taxon>
        <taxon>Muridae</taxon>
        <taxon>Murinae</taxon>
        <taxon>Mus</taxon>
        <taxon>Mus</taxon>
    </lineage>
</organism>
<name>FNDC4_MOUSE</name>
<protein>
    <recommendedName>
        <fullName>Fibronectin type III domain-containing protein 4</fullName>
    </recommendedName>
    <alternativeName>
        <fullName>Fibronectin type III repeat-containing protein 1</fullName>
    </alternativeName>
    <component>
        <recommendedName>
            <fullName evidence="10">Soluble FNDC4</fullName>
            <shortName evidence="10">sFNDC4</shortName>
        </recommendedName>
    </component>
</protein>
<keyword id="KW-0325">Glycoprotein</keyword>
<keyword id="KW-0472">Membrane</keyword>
<keyword id="KW-1185">Reference proteome</keyword>
<keyword id="KW-0964">Secreted</keyword>
<keyword id="KW-0732">Signal</keyword>
<keyword id="KW-0812">Transmembrane</keyword>
<keyword id="KW-1133">Transmembrane helix</keyword>
<proteinExistence type="evidence at transcript level"/>